<organism>
    <name type="scientific">Enterobacter sp. (strain 638)</name>
    <dbReference type="NCBI Taxonomy" id="399742"/>
    <lineage>
        <taxon>Bacteria</taxon>
        <taxon>Pseudomonadati</taxon>
        <taxon>Pseudomonadota</taxon>
        <taxon>Gammaproteobacteria</taxon>
        <taxon>Enterobacterales</taxon>
        <taxon>Enterobacteriaceae</taxon>
        <taxon>Enterobacter</taxon>
    </lineage>
</organism>
<sequence length="396" mass="44838">MEQTWRWYGPNDPVSLDDVRQAGATGVVTALHHIPNGEVWPVEEIKKRQAVLADKGLTWSVVESIPVHEDIKTHSGQFETWIANYQQSIRNLATCGIDTVCYNFMPILDWTRTDLEYQMPDGSRALRFDQIAFAAFELHILKRPSAEADYSAEEQQQALKWFEDASDADIEKLTRNIIAGLPGAEEGYTLDQFRARLAEYGDIDKNQLRENMAYFLRAIVPVAEACGLRLAVHPDDPPRPILGLPRIVSTIEDMQWLKETVDSINNGFTMCTGSYGVREDNDLVKMIEAFGDRIHFTHLRATCRENNPKTFHEAAHLGGDVNMVAVVDAILSEEQRRKHAGDMRPIPFRPDHGHQMLDDLRKKTNPGYSAIGRLKGMAEVRGVELALKMLKYPELL</sequence>
<proteinExistence type="inferred from homology"/>
<evidence type="ECO:0000255" key="1">
    <source>
        <dbReference type="HAMAP-Rule" id="MF_00106"/>
    </source>
</evidence>
<comment type="function">
    <text evidence="1">Catalyzes the dehydration of D-mannonate.</text>
</comment>
<comment type="catalytic activity">
    <reaction evidence="1">
        <text>D-mannonate = 2-dehydro-3-deoxy-D-gluconate + H2O</text>
        <dbReference type="Rhea" id="RHEA:20097"/>
        <dbReference type="ChEBI" id="CHEBI:15377"/>
        <dbReference type="ChEBI" id="CHEBI:17767"/>
        <dbReference type="ChEBI" id="CHEBI:57990"/>
        <dbReference type="EC" id="4.2.1.8"/>
    </reaction>
</comment>
<comment type="cofactor">
    <cofactor evidence="1">
        <name>Fe(2+)</name>
        <dbReference type="ChEBI" id="CHEBI:29033"/>
    </cofactor>
    <cofactor evidence="1">
        <name>Mn(2+)</name>
        <dbReference type="ChEBI" id="CHEBI:29035"/>
    </cofactor>
</comment>
<comment type="pathway">
    <text evidence="1">Carbohydrate metabolism; pentose and glucuronate interconversion.</text>
</comment>
<comment type="similarity">
    <text evidence="1">Belongs to the mannonate dehydratase family.</text>
</comment>
<gene>
    <name evidence="1" type="primary">uxuA</name>
    <name type="ordered locus">Ent638_2767</name>
</gene>
<protein>
    <recommendedName>
        <fullName evidence="1">Mannonate dehydratase</fullName>
        <ecNumber evidence="1">4.2.1.8</ecNumber>
    </recommendedName>
    <alternativeName>
        <fullName evidence="1">D-mannonate hydro-lyase</fullName>
    </alternativeName>
</protein>
<accession>A4WCK2</accession>
<reference key="1">
    <citation type="journal article" date="2010" name="PLoS Genet.">
        <title>Genome sequence of the plant growth promoting endophytic bacterium Enterobacter sp. 638.</title>
        <authorList>
            <person name="Taghavi S."/>
            <person name="van der Lelie D."/>
            <person name="Hoffman A."/>
            <person name="Zhang Y.B."/>
            <person name="Walla M.D."/>
            <person name="Vangronsveld J."/>
            <person name="Newman L."/>
            <person name="Monchy S."/>
        </authorList>
    </citation>
    <scope>NUCLEOTIDE SEQUENCE [LARGE SCALE GENOMIC DNA]</scope>
    <source>
        <strain>638</strain>
    </source>
</reference>
<keyword id="KW-0408">Iron</keyword>
<keyword id="KW-0456">Lyase</keyword>
<keyword id="KW-0464">Manganese</keyword>
<feature type="chain" id="PRO_1000057702" description="Mannonate dehydratase">
    <location>
        <begin position="1"/>
        <end position="396"/>
    </location>
</feature>
<dbReference type="EC" id="4.2.1.8" evidence="1"/>
<dbReference type="EMBL" id="CP000653">
    <property type="protein sequence ID" value="ABP61432.1"/>
    <property type="molecule type" value="Genomic_DNA"/>
</dbReference>
<dbReference type="RefSeq" id="WP_015959765.1">
    <property type="nucleotide sequence ID" value="NC_009436.1"/>
</dbReference>
<dbReference type="SMR" id="A4WCK2"/>
<dbReference type="STRING" id="399742.Ent638_2767"/>
<dbReference type="KEGG" id="ent:Ent638_2767"/>
<dbReference type="eggNOG" id="COG1312">
    <property type="taxonomic scope" value="Bacteria"/>
</dbReference>
<dbReference type="HOGENOM" id="CLU_058621_2_0_6"/>
<dbReference type="OrthoDB" id="9780250at2"/>
<dbReference type="UniPathway" id="UPA00246"/>
<dbReference type="Proteomes" id="UP000000230">
    <property type="component" value="Chromosome"/>
</dbReference>
<dbReference type="GO" id="GO:0008198">
    <property type="term" value="F:ferrous iron binding"/>
    <property type="evidence" value="ECO:0007669"/>
    <property type="project" value="TreeGrafter"/>
</dbReference>
<dbReference type="GO" id="GO:0030145">
    <property type="term" value="F:manganese ion binding"/>
    <property type="evidence" value="ECO:0007669"/>
    <property type="project" value="TreeGrafter"/>
</dbReference>
<dbReference type="GO" id="GO:0008927">
    <property type="term" value="F:mannonate dehydratase activity"/>
    <property type="evidence" value="ECO:0007669"/>
    <property type="project" value="UniProtKB-UniRule"/>
</dbReference>
<dbReference type="GO" id="GO:0042840">
    <property type="term" value="P:D-glucuronate catabolic process"/>
    <property type="evidence" value="ECO:0007669"/>
    <property type="project" value="TreeGrafter"/>
</dbReference>
<dbReference type="FunFam" id="3.20.20.150:FF:000010">
    <property type="entry name" value="Mannonate dehydratase"/>
    <property type="match status" value="1"/>
</dbReference>
<dbReference type="Gene3D" id="3.20.20.150">
    <property type="entry name" value="Divalent-metal-dependent TIM barrel enzymes"/>
    <property type="match status" value="1"/>
</dbReference>
<dbReference type="HAMAP" id="MF_00106">
    <property type="entry name" value="UxuA"/>
    <property type="match status" value="1"/>
</dbReference>
<dbReference type="InterPro" id="IPR004628">
    <property type="entry name" value="Man_deHydtase"/>
</dbReference>
<dbReference type="InterPro" id="IPR036237">
    <property type="entry name" value="Xyl_isomerase-like_sf"/>
</dbReference>
<dbReference type="NCBIfam" id="NF003027">
    <property type="entry name" value="PRK03906.1"/>
    <property type="match status" value="1"/>
</dbReference>
<dbReference type="NCBIfam" id="TIGR00695">
    <property type="entry name" value="uxuA"/>
    <property type="match status" value="1"/>
</dbReference>
<dbReference type="PANTHER" id="PTHR30387">
    <property type="entry name" value="MANNONATE DEHYDRATASE"/>
    <property type="match status" value="1"/>
</dbReference>
<dbReference type="PANTHER" id="PTHR30387:SF2">
    <property type="entry name" value="MANNONATE DEHYDRATASE"/>
    <property type="match status" value="1"/>
</dbReference>
<dbReference type="Pfam" id="PF03786">
    <property type="entry name" value="UxuA"/>
    <property type="match status" value="1"/>
</dbReference>
<dbReference type="PIRSF" id="PIRSF016049">
    <property type="entry name" value="Man_dehyd"/>
    <property type="match status" value="1"/>
</dbReference>
<dbReference type="SUPFAM" id="SSF51658">
    <property type="entry name" value="Xylose isomerase-like"/>
    <property type="match status" value="1"/>
</dbReference>
<name>UXUA_ENT38</name>